<organism>
    <name type="scientific">Streptococcus pyogenes serotype M6 (strain ATCC BAA-946 / MGAS10394)</name>
    <dbReference type="NCBI Taxonomy" id="286636"/>
    <lineage>
        <taxon>Bacteria</taxon>
        <taxon>Bacillati</taxon>
        <taxon>Bacillota</taxon>
        <taxon>Bacilli</taxon>
        <taxon>Lactobacillales</taxon>
        <taxon>Streptococcaceae</taxon>
        <taxon>Streptococcus</taxon>
    </lineage>
</organism>
<name>LGT_STRP6</name>
<keyword id="KW-1003">Cell membrane</keyword>
<keyword id="KW-0472">Membrane</keyword>
<keyword id="KW-0808">Transferase</keyword>
<keyword id="KW-0812">Transmembrane</keyword>
<keyword id="KW-1133">Transmembrane helix</keyword>
<evidence type="ECO:0000255" key="1">
    <source>
        <dbReference type="HAMAP-Rule" id="MF_01147"/>
    </source>
</evidence>
<sequence>MINPIALKCGPLAIHWYALCILSGLVLAVYLASKEAPKKGISSDAIFDFILIAFPLAIVGARIYYVIFEWSYYVKHLDEIIAIWNGGIAIYGGLITGALVLLAYCYNKVLNPIHFLDIAAPSVMVAQAIGRWGNFINQEAYGKAVSQLNYLPSFIQKQMFIEGSYRIPTFLYESLWNLLGFVIIMMWRRKPKSLLDGEIFAFYLIWYGSGRLVIEGMRTDSLMFLGIRISQYVSALLIIIGLIFVIKRRRQKGISYYQE</sequence>
<feature type="chain" id="PRO_0000172692" description="Phosphatidylglycerol--prolipoprotein diacylglyceryl transferase">
    <location>
        <begin position="1"/>
        <end position="259"/>
    </location>
</feature>
<feature type="transmembrane region" description="Helical" evidence="1">
    <location>
        <begin position="12"/>
        <end position="32"/>
    </location>
</feature>
<feature type="transmembrane region" description="Helical" evidence="1">
    <location>
        <begin position="41"/>
        <end position="61"/>
    </location>
</feature>
<feature type="transmembrane region" description="Helical" evidence="1">
    <location>
        <begin position="80"/>
        <end position="100"/>
    </location>
</feature>
<feature type="transmembrane region" description="Helical" evidence="1">
    <location>
        <begin position="109"/>
        <end position="129"/>
    </location>
</feature>
<feature type="transmembrane region" description="Helical" evidence="1">
    <location>
        <begin position="167"/>
        <end position="187"/>
    </location>
</feature>
<feature type="transmembrane region" description="Helical" evidence="1">
    <location>
        <begin position="194"/>
        <end position="214"/>
    </location>
</feature>
<feature type="transmembrane region" description="Helical" evidence="1">
    <location>
        <begin position="226"/>
        <end position="246"/>
    </location>
</feature>
<feature type="binding site" evidence="1">
    <location>
        <position position="131"/>
    </location>
    <ligand>
        <name>a 1,2-diacyl-sn-glycero-3-phospho-(1'-sn-glycerol)</name>
        <dbReference type="ChEBI" id="CHEBI:64716"/>
    </ligand>
</feature>
<accession>Q5XD70</accession>
<reference key="1">
    <citation type="journal article" date="2004" name="J. Infect. Dis.">
        <title>Progress toward characterization of the group A Streptococcus metagenome: complete genome sequence of a macrolide-resistant serotype M6 strain.</title>
        <authorList>
            <person name="Banks D.J."/>
            <person name="Porcella S.F."/>
            <person name="Barbian K.D."/>
            <person name="Beres S.B."/>
            <person name="Philips L.E."/>
            <person name="Voyich J.M."/>
            <person name="DeLeo F.R."/>
            <person name="Martin J.M."/>
            <person name="Somerville G.A."/>
            <person name="Musser J.M."/>
        </authorList>
    </citation>
    <scope>NUCLEOTIDE SEQUENCE [LARGE SCALE GENOMIC DNA]</scope>
    <source>
        <strain>ATCC BAA-946 / MGAS10394</strain>
    </source>
</reference>
<dbReference type="EC" id="2.5.1.145" evidence="1"/>
<dbReference type="EMBL" id="CP000003">
    <property type="protein sequence ID" value="AAT86643.1"/>
    <property type="molecule type" value="Genomic_DNA"/>
</dbReference>
<dbReference type="RefSeq" id="WP_002990577.1">
    <property type="nucleotide sequence ID" value="NC_006086.1"/>
</dbReference>
<dbReference type="SMR" id="Q5XD70"/>
<dbReference type="GeneID" id="69901201"/>
<dbReference type="KEGG" id="spa:M6_Spy0508"/>
<dbReference type="HOGENOM" id="CLU_013386_0_1_9"/>
<dbReference type="UniPathway" id="UPA00664"/>
<dbReference type="Proteomes" id="UP000001167">
    <property type="component" value="Chromosome"/>
</dbReference>
<dbReference type="GO" id="GO:0005886">
    <property type="term" value="C:plasma membrane"/>
    <property type="evidence" value="ECO:0007669"/>
    <property type="project" value="UniProtKB-SubCell"/>
</dbReference>
<dbReference type="GO" id="GO:0008961">
    <property type="term" value="F:phosphatidylglycerol-prolipoprotein diacylglyceryl transferase activity"/>
    <property type="evidence" value="ECO:0007669"/>
    <property type="project" value="UniProtKB-UniRule"/>
</dbReference>
<dbReference type="GO" id="GO:0042158">
    <property type="term" value="P:lipoprotein biosynthetic process"/>
    <property type="evidence" value="ECO:0007669"/>
    <property type="project" value="UniProtKB-UniRule"/>
</dbReference>
<dbReference type="HAMAP" id="MF_01147">
    <property type="entry name" value="Lgt"/>
    <property type="match status" value="1"/>
</dbReference>
<dbReference type="InterPro" id="IPR001640">
    <property type="entry name" value="Lgt"/>
</dbReference>
<dbReference type="NCBIfam" id="TIGR00544">
    <property type="entry name" value="lgt"/>
    <property type="match status" value="1"/>
</dbReference>
<dbReference type="PANTHER" id="PTHR30589:SF0">
    <property type="entry name" value="PHOSPHATIDYLGLYCEROL--PROLIPOPROTEIN DIACYLGLYCERYL TRANSFERASE"/>
    <property type="match status" value="1"/>
</dbReference>
<dbReference type="PANTHER" id="PTHR30589">
    <property type="entry name" value="PROLIPOPROTEIN DIACYLGLYCERYL TRANSFERASE"/>
    <property type="match status" value="1"/>
</dbReference>
<dbReference type="Pfam" id="PF01790">
    <property type="entry name" value="LGT"/>
    <property type="match status" value="1"/>
</dbReference>
<dbReference type="PROSITE" id="PS01311">
    <property type="entry name" value="LGT"/>
    <property type="match status" value="1"/>
</dbReference>
<proteinExistence type="inferred from homology"/>
<gene>
    <name evidence="1" type="primary">lgt</name>
    <name type="ordered locus">M6_Spy0508</name>
</gene>
<comment type="function">
    <text evidence="1">Catalyzes the transfer of the diacylglyceryl group from phosphatidylglycerol to the sulfhydryl group of the N-terminal cysteine of a prolipoprotein, the first step in the formation of mature lipoproteins.</text>
</comment>
<comment type="catalytic activity">
    <reaction evidence="1">
        <text>L-cysteinyl-[prolipoprotein] + a 1,2-diacyl-sn-glycero-3-phospho-(1'-sn-glycerol) = an S-1,2-diacyl-sn-glyceryl-L-cysteinyl-[prolipoprotein] + sn-glycerol 1-phosphate + H(+)</text>
        <dbReference type="Rhea" id="RHEA:56712"/>
        <dbReference type="Rhea" id="RHEA-COMP:14679"/>
        <dbReference type="Rhea" id="RHEA-COMP:14680"/>
        <dbReference type="ChEBI" id="CHEBI:15378"/>
        <dbReference type="ChEBI" id="CHEBI:29950"/>
        <dbReference type="ChEBI" id="CHEBI:57685"/>
        <dbReference type="ChEBI" id="CHEBI:64716"/>
        <dbReference type="ChEBI" id="CHEBI:140658"/>
        <dbReference type="EC" id="2.5.1.145"/>
    </reaction>
</comment>
<comment type="pathway">
    <text evidence="1">Protein modification; lipoprotein biosynthesis (diacylglyceryl transfer).</text>
</comment>
<comment type="subcellular location">
    <subcellularLocation>
        <location evidence="1">Cell membrane</location>
        <topology evidence="1">Multi-pass membrane protein</topology>
    </subcellularLocation>
</comment>
<comment type="similarity">
    <text evidence="1">Belongs to the Lgt family.</text>
</comment>
<protein>
    <recommendedName>
        <fullName evidence="1">Phosphatidylglycerol--prolipoprotein diacylglyceryl transferase</fullName>
        <ecNumber evidence="1">2.5.1.145</ecNumber>
    </recommendedName>
</protein>